<reference key="1">
    <citation type="submission" date="2007-07" db="EMBL/GenBank/DDBJ databases">
        <title>Complete sequence of chromosome of Shewanella baltica OS185.</title>
        <authorList>
            <consortium name="US DOE Joint Genome Institute"/>
            <person name="Copeland A."/>
            <person name="Lucas S."/>
            <person name="Lapidus A."/>
            <person name="Barry K."/>
            <person name="Glavina del Rio T."/>
            <person name="Dalin E."/>
            <person name="Tice H."/>
            <person name="Pitluck S."/>
            <person name="Sims D."/>
            <person name="Brettin T."/>
            <person name="Bruce D."/>
            <person name="Detter J.C."/>
            <person name="Han C."/>
            <person name="Schmutz J."/>
            <person name="Larimer F."/>
            <person name="Land M."/>
            <person name="Hauser L."/>
            <person name="Kyrpides N."/>
            <person name="Mikhailova N."/>
            <person name="Brettar I."/>
            <person name="Rodrigues J."/>
            <person name="Konstantinidis K."/>
            <person name="Tiedje J."/>
            <person name="Richardson P."/>
        </authorList>
    </citation>
    <scope>NUCLEOTIDE SEQUENCE [LARGE SCALE GENOMIC DNA]</scope>
    <source>
        <strain>OS185</strain>
    </source>
</reference>
<name>HUTU_SHEB8</name>
<protein>
    <recommendedName>
        <fullName evidence="1">Urocanate hydratase</fullName>
        <shortName evidence="1">Urocanase</shortName>
        <ecNumber evidence="1">4.2.1.49</ecNumber>
    </recommendedName>
    <alternativeName>
        <fullName evidence="1">Imidazolonepropionate hydrolase</fullName>
    </alternativeName>
</protein>
<keyword id="KW-0963">Cytoplasm</keyword>
<keyword id="KW-0369">Histidine metabolism</keyword>
<keyword id="KW-0456">Lyase</keyword>
<keyword id="KW-0520">NAD</keyword>
<feature type="chain" id="PRO_1000025149" description="Urocanate hydratase">
    <location>
        <begin position="1"/>
        <end position="555"/>
    </location>
</feature>
<feature type="active site" evidence="1">
    <location>
        <position position="410"/>
    </location>
</feature>
<feature type="binding site" evidence="1">
    <location>
        <begin position="52"/>
        <end position="53"/>
    </location>
    <ligand>
        <name>NAD(+)</name>
        <dbReference type="ChEBI" id="CHEBI:57540"/>
    </ligand>
</feature>
<feature type="binding site" evidence="1">
    <location>
        <position position="130"/>
    </location>
    <ligand>
        <name>NAD(+)</name>
        <dbReference type="ChEBI" id="CHEBI:57540"/>
    </ligand>
</feature>
<feature type="binding site" evidence="1">
    <location>
        <begin position="176"/>
        <end position="178"/>
    </location>
    <ligand>
        <name>NAD(+)</name>
        <dbReference type="ChEBI" id="CHEBI:57540"/>
    </ligand>
</feature>
<feature type="binding site" evidence="1">
    <location>
        <position position="196"/>
    </location>
    <ligand>
        <name>NAD(+)</name>
        <dbReference type="ChEBI" id="CHEBI:57540"/>
    </ligand>
</feature>
<feature type="binding site" evidence="1">
    <location>
        <position position="201"/>
    </location>
    <ligand>
        <name>NAD(+)</name>
        <dbReference type="ChEBI" id="CHEBI:57540"/>
    </ligand>
</feature>
<feature type="binding site" evidence="1">
    <location>
        <begin position="242"/>
        <end position="243"/>
    </location>
    <ligand>
        <name>NAD(+)</name>
        <dbReference type="ChEBI" id="CHEBI:57540"/>
    </ligand>
</feature>
<feature type="binding site" evidence="1">
    <location>
        <begin position="263"/>
        <end position="267"/>
    </location>
    <ligand>
        <name>NAD(+)</name>
        <dbReference type="ChEBI" id="CHEBI:57540"/>
    </ligand>
</feature>
<feature type="binding site" evidence="1">
    <location>
        <begin position="273"/>
        <end position="274"/>
    </location>
    <ligand>
        <name>NAD(+)</name>
        <dbReference type="ChEBI" id="CHEBI:57540"/>
    </ligand>
</feature>
<feature type="binding site" evidence="1">
    <location>
        <position position="322"/>
    </location>
    <ligand>
        <name>NAD(+)</name>
        <dbReference type="ChEBI" id="CHEBI:57540"/>
    </ligand>
</feature>
<feature type="binding site" evidence="1">
    <location>
        <position position="492"/>
    </location>
    <ligand>
        <name>NAD(+)</name>
        <dbReference type="ChEBI" id="CHEBI:57540"/>
    </ligand>
</feature>
<comment type="function">
    <text evidence="1">Catalyzes the conversion of urocanate to 4-imidazolone-5-propionate.</text>
</comment>
<comment type="catalytic activity">
    <reaction evidence="1">
        <text>4-imidazolone-5-propanoate = trans-urocanate + H2O</text>
        <dbReference type="Rhea" id="RHEA:13101"/>
        <dbReference type="ChEBI" id="CHEBI:15377"/>
        <dbReference type="ChEBI" id="CHEBI:17771"/>
        <dbReference type="ChEBI" id="CHEBI:77893"/>
        <dbReference type="EC" id="4.2.1.49"/>
    </reaction>
</comment>
<comment type="cofactor">
    <cofactor evidence="1">
        <name>NAD(+)</name>
        <dbReference type="ChEBI" id="CHEBI:57540"/>
    </cofactor>
    <text evidence="1">Binds 1 NAD(+) per subunit.</text>
</comment>
<comment type="pathway">
    <text evidence="1">Amino-acid degradation; L-histidine degradation into L-glutamate; N-formimidoyl-L-glutamate from L-histidine: step 2/3.</text>
</comment>
<comment type="subcellular location">
    <subcellularLocation>
        <location evidence="1">Cytoplasm</location>
    </subcellularLocation>
</comment>
<comment type="similarity">
    <text evidence="1">Belongs to the urocanase family.</text>
</comment>
<gene>
    <name evidence="1" type="primary">hutU</name>
    <name type="ordered locus">Shew185_0097</name>
</gene>
<organism>
    <name type="scientific">Shewanella baltica (strain OS185)</name>
    <dbReference type="NCBI Taxonomy" id="402882"/>
    <lineage>
        <taxon>Bacteria</taxon>
        <taxon>Pseudomonadati</taxon>
        <taxon>Pseudomonadota</taxon>
        <taxon>Gammaproteobacteria</taxon>
        <taxon>Alteromonadales</taxon>
        <taxon>Shewanellaceae</taxon>
        <taxon>Shewanella</taxon>
    </lineage>
</organism>
<accession>A6WHI0</accession>
<proteinExistence type="inferred from homology"/>
<evidence type="ECO:0000255" key="1">
    <source>
        <dbReference type="HAMAP-Rule" id="MF_00577"/>
    </source>
</evidence>
<sequence length="555" mass="60281">MDKRHDPSRRIIAPHGTQLSCKSWLTEAPMRMLMNNLHPDVAERPEDLVVYGGIGRAARDWDCYDKIIEVLQRLEDDETLLVQSGKPVGVFRTHADAPRVLIANSNLVPHWANWEHFNELDKLGLAMYGQMTAGSWIYIGTQGIVQGTYETFVSVAKQHFEGISKGKWILTGGLGGMGGAQTLAGTMAGFSVLACEVDETRIDFRLRTRYVDKKATSLDEALAMIEAANQAGKPVSVGLLANAADVFAELVKRGVTPDVVTDQTSAHDPLNGYLPQGWTMAEAAAMRKTDEAGVVKAAKASMAVQVQAMLDLQTAGAATLDYGNNIRQMAFEMGVENAFDFPGFVPAYIRPLFCEGIGPFRWVALSGDPEDIYKTDAKVKELIPDNPHLHNWLDMARERIAFQGLPARICWVGLKDRARLALAFNEMVKNGELSAPVVIGRDHLDSGSVASPNRETESMLDGSDAVSDWPLLNALLNTASGATWVSLHHGGGVGMGFSQHSGVVIVCDGTDAAAKRVGRVLWNDPATGVMRHADAGYEIAKNCAKEQGLDLPMQE</sequence>
<dbReference type="EC" id="4.2.1.49" evidence="1"/>
<dbReference type="EMBL" id="CP000753">
    <property type="protein sequence ID" value="ABS06269.1"/>
    <property type="molecule type" value="Genomic_DNA"/>
</dbReference>
<dbReference type="RefSeq" id="WP_011982050.1">
    <property type="nucleotide sequence ID" value="NC_009665.1"/>
</dbReference>
<dbReference type="SMR" id="A6WHI0"/>
<dbReference type="KEGG" id="sbm:Shew185_0097"/>
<dbReference type="HOGENOM" id="CLU_018868_0_1_6"/>
<dbReference type="UniPathway" id="UPA00379">
    <property type="reaction ID" value="UER00550"/>
</dbReference>
<dbReference type="GO" id="GO:0005737">
    <property type="term" value="C:cytoplasm"/>
    <property type="evidence" value="ECO:0007669"/>
    <property type="project" value="UniProtKB-SubCell"/>
</dbReference>
<dbReference type="GO" id="GO:0016153">
    <property type="term" value="F:urocanate hydratase activity"/>
    <property type="evidence" value="ECO:0007669"/>
    <property type="project" value="UniProtKB-UniRule"/>
</dbReference>
<dbReference type="GO" id="GO:0019556">
    <property type="term" value="P:L-histidine catabolic process to glutamate and formamide"/>
    <property type="evidence" value="ECO:0007669"/>
    <property type="project" value="UniProtKB-UniPathway"/>
</dbReference>
<dbReference type="GO" id="GO:0019557">
    <property type="term" value="P:L-histidine catabolic process to glutamate and formate"/>
    <property type="evidence" value="ECO:0007669"/>
    <property type="project" value="UniProtKB-UniPathway"/>
</dbReference>
<dbReference type="FunFam" id="3.40.50.10730:FF:000001">
    <property type="entry name" value="Urocanate hydratase"/>
    <property type="match status" value="1"/>
</dbReference>
<dbReference type="Gene3D" id="3.40.50.10730">
    <property type="entry name" value="Urocanase like domains"/>
    <property type="match status" value="1"/>
</dbReference>
<dbReference type="Gene3D" id="3.40.1770.10">
    <property type="entry name" value="Urocanase superfamily"/>
    <property type="match status" value="1"/>
</dbReference>
<dbReference type="HAMAP" id="MF_00577">
    <property type="entry name" value="HutU"/>
    <property type="match status" value="1"/>
</dbReference>
<dbReference type="InterPro" id="IPR055351">
    <property type="entry name" value="Urocanase"/>
</dbReference>
<dbReference type="InterPro" id="IPR023637">
    <property type="entry name" value="Urocanase-like"/>
</dbReference>
<dbReference type="InterPro" id="IPR035401">
    <property type="entry name" value="Urocanase_C"/>
</dbReference>
<dbReference type="InterPro" id="IPR038364">
    <property type="entry name" value="Urocanase_central_sf"/>
</dbReference>
<dbReference type="InterPro" id="IPR023636">
    <property type="entry name" value="Urocanase_CS"/>
</dbReference>
<dbReference type="InterPro" id="IPR035400">
    <property type="entry name" value="Urocanase_N"/>
</dbReference>
<dbReference type="InterPro" id="IPR035085">
    <property type="entry name" value="Urocanase_Rossmann-like"/>
</dbReference>
<dbReference type="InterPro" id="IPR036190">
    <property type="entry name" value="Urocanase_sf"/>
</dbReference>
<dbReference type="NCBIfam" id="TIGR01228">
    <property type="entry name" value="hutU"/>
    <property type="match status" value="1"/>
</dbReference>
<dbReference type="NCBIfam" id="NF003820">
    <property type="entry name" value="PRK05414.1"/>
    <property type="match status" value="1"/>
</dbReference>
<dbReference type="PANTHER" id="PTHR12216">
    <property type="entry name" value="UROCANATE HYDRATASE"/>
    <property type="match status" value="1"/>
</dbReference>
<dbReference type="PANTHER" id="PTHR12216:SF4">
    <property type="entry name" value="UROCANATE HYDRATASE"/>
    <property type="match status" value="1"/>
</dbReference>
<dbReference type="Pfam" id="PF01175">
    <property type="entry name" value="Urocanase"/>
    <property type="match status" value="1"/>
</dbReference>
<dbReference type="Pfam" id="PF17392">
    <property type="entry name" value="Urocanase_C"/>
    <property type="match status" value="1"/>
</dbReference>
<dbReference type="Pfam" id="PF17391">
    <property type="entry name" value="Urocanase_N"/>
    <property type="match status" value="1"/>
</dbReference>
<dbReference type="PIRSF" id="PIRSF001423">
    <property type="entry name" value="Urocanate_hydrat"/>
    <property type="match status" value="1"/>
</dbReference>
<dbReference type="SUPFAM" id="SSF111326">
    <property type="entry name" value="Urocanase"/>
    <property type="match status" value="1"/>
</dbReference>
<dbReference type="PROSITE" id="PS01233">
    <property type="entry name" value="UROCANASE"/>
    <property type="match status" value="1"/>
</dbReference>